<organism>
    <name type="scientific">Legionella pneumophila (strain Corby)</name>
    <dbReference type="NCBI Taxonomy" id="400673"/>
    <lineage>
        <taxon>Bacteria</taxon>
        <taxon>Pseudomonadati</taxon>
        <taxon>Pseudomonadota</taxon>
        <taxon>Gammaproteobacteria</taxon>
        <taxon>Legionellales</taxon>
        <taxon>Legionellaceae</taxon>
        <taxon>Legionella</taxon>
    </lineage>
</organism>
<dbReference type="EMBL" id="CP000675">
    <property type="protein sequence ID" value="ABQ56480.1"/>
    <property type="molecule type" value="Genomic_DNA"/>
</dbReference>
<dbReference type="RefSeq" id="WP_011213300.1">
    <property type="nucleotide sequence ID" value="NZ_JAPMSS010000015.1"/>
</dbReference>
<dbReference type="SMR" id="A5IGI0"/>
<dbReference type="GeneID" id="57034720"/>
<dbReference type="KEGG" id="lpc:LPC_2565"/>
<dbReference type="HOGENOM" id="CLU_087843_4_1_6"/>
<dbReference type="GO" id="GO:0005829">
    <property type="term" value="C:cytosol"/>
    <property type="evidence" value="ECO:0007669"/>
    <property type="project" value="TreeGrafter"/>
</dbReference>
<dbReference type="GO" id="GO:0003723">
    <property type="term" value="F:RNA binding"/>
    <property type="evidence" value="ECO:0007669"/>
    <property type="project" value="UniProtKB-UniRule"/>
</dbReference>
<dbReference type="GO" id="GO:0006353">
    <property type="term" value="P:DNA-templated transcription termination"/>
    <property type="evidence" value="ECO:0007669"/>
    <property type="project" value="UniProtKB-UniRule"/>
</dbReference>
<dbReference type="GO" id="GO:0031564">
    <property type="term" value="P:transcription antitermination"/>
    <property type="evidence" value="ECO:0007669"/>
    <property type="project" value="UniProtKB-KW"/>
</dbReference>
<dbReference type="Gene3D" id="1.10.940.10">
    <property type="entry name" value="NusB-like"/>
    <property type="match status" value="1"/>
</dbReference>
<dbReference type="HAMAP" id="MF_00073">
    <property type="entry name" value="NusB"/>
    <property type="match status" value="1"/>
</dbReference>
<dbReference type="InterPro" id="IPR035926">
    <property type="entry name" value="NusB-like_sf"/>
</dbReference>
<dbReference type="InterPro" id="IPR011605">
    <property type="entry name" value="NusB_fam"/>
</dbReference>
<dbReference type="InterPro" id="IPR006027">
    <property type="entry name" value="NusB_RsmB_TIM44"/>
</dbReference>
<dbReference type="NCBIfam" id="TIGR01951">
    <property type="entry name" value="nusB"/>
    <property type="match status" value="1"/>
</dbReference>
<dbReference type="PANTHER" id="PTHR11078:SF3">
    <property type="entry name" value="ANTITERMINATION NUSB DOMAIN-CONTAINING PROTEIN"/>
    <property type="match status" value="1"/>
</dbReference>
<dbReference type="PANTHER" id="PTHR11078">
    <property type="entry name" value="N UTILIZATION SUBSTANCE PROTEIN B-RELATED"/>
    <property type="match status" value="1"/>
</dbReference>
<dbReference type="Pfam" id="PF01029">
    <property type="entry name" value="NusB"/>
    <property type="match status" value="1"/>
</dbReference>
<dbReference type="SUPFAM" id="SSF48013">
    <property type="entry name" value="NusB-like"/>
    <property type="match status" value="1"/>
</dbReference>
<protein>
    <recommendedName>
        <fullName evidence="1">Transcription antitermination protein NusB</fullName>
    </recommendedName>
    <alternativeName>
        <fullName evidence="1">Antitermination factor NusB</fullName>
    </alternativeName>
</protein>
<keyword id="KW-0694">RNA-binding</keyword>
<keyword id="KW-0804">Transcription</keyword>
<keyword id="KW-0889">Transcription antitermination</keyword>
<keyword id="KW-0805">Transcription regulation</keyword>
<feature type="chain" id="PRO_1000023742" description="Transcription antitermination protein NusB">
    <location>
        <begin position="1"/>
        <end position="147"/>
    </location>
</feature>
<reference key="1">
    <citation type="submission" date="2006-11" db="EMBL/GenBank/DDBJ databases">
        <title>Identification and characterization of a new conjugation/ type IVA secretion system (trb/tra) of L. pneumophila Corby localized on a mobile genomic island.</title>
        <authorList>
            <person name="Gloeckner G."/>
            <person name="Albert-Weissenberger C."/>
            <person name="Weinmann E."/>
            <person name="Jacobi S."/>
            <person name="Schunder E."/>
            <person name="Steinert M."/>
            <person name="Buchrieser C."/>
            <person name="Hacker J."/>
            <person name="Heuner K."/>
        </authorList>
    </citation>
    <scope>NUCLEOTIDE SEQUENCE [LARGE SCALE GENOMIC DNA]</scope>
    <source>
        <strain>Corby</strain>
    </source>
</reference>
<sequence>MEKQSIRGKRRARKFALQALYQWLMSGTDLHEIEAQFRTINNMDKVDGEYFCRLLYGIPTHVEALEASLLPYLDREINALNPIELTVLRIGSFELFHCPEIPYKVILDESVSLTKEFGSQEGYRYVNGVLNNLAKQVRSVEVSLDNE</sequence>
<evidence type="ECO:0000255" key="1">
    <source>
        <dbReference type="HAMAP-Rule" id="MF_00073"/>
    </source>
</evidence>
<name>NUSB_LEGPC</name>
<comment type="function">
    <text evidence="1">Involved in transcription antitermination. Required for transcription of ribosomal RNA (rRNA) genes. Binds specifically to the boxA antiterminator sequence of the ribosomal RNA (rrn) operons.</text>
</comment>
<comment type="similarity">
    <text evidence="1">Belongs to the NusB family.</text>
</comment>
<gene>
    <name evidence="1" type="primary">nusB</name>
    <name type="ordered locus">LPC_2565</name>
</gene>
<accession>A5IGI0</accession>
<proteinExistence type="inferred from homology"/>